<keyword id="KW-0131">Cell cycle</keyword>
<keyword id="KW-0132">Cell division</keyword>
<keyword id="KW-0133">Cell shape</keyword>
<keyword id="KW-0961">Cell wall biogenesis/degradation</keyword>
<keyword id="KW-0963">Cytoplasm</keyword>
<keyword id="KW-0573">Peptidoglycan synthesis</keyword>
<keyword id="KW-1185">Reference proteome</keyword>
<keyword id="KW-0808">Transferase</keyword>
<sequence>MAERFVVTGGNRLSGEVAVGGAKNSVLKLMAATLLAEGTSTITNCPDILDVPLMAEVLRGLGATVELDGDVARITAPDEPKYDADFAAVRQFRASVCVLGPLVGRCKRARVALPGGDAIGSRPLDMHQAGLRQLGAHCNIEHGCVVARAETLRGAEIQLEFPSVGATENILMAAVVAEGVTTIHNAAREPDVVDLCTMLNQMGAQVEGAGSPTMTITGVPRLHPTEHRVIGDRIVAATWGIAAAMTRGDISVAGVDPAHLQLVLHKLHDAGATVTQTDASFRVTQYERPKAVNVATLPFPGFPTDLQPMAIALASIADGTSMITENVFEARFRFVEEMIRLGADARTDGHHAVVRGLPQLSSAPVWCSDIRAGAGLVLAGLVADGDTEVHDVFHIDRGYPLFVENLVSLGAEIERVCC</sequence>
<protein>
    <recommendedName>
        <fullName evidence="1">UDP-N-acetylglucosamine 1-carboxyvinyltransferase</fullName>
        <ecNumber evidence="1">2.5.1.7</ecNumber>
    </recommendedName>
    <alternativeName>
        <fullName evidence="1">Enoylpyruvate transferase</fullName>
    </alternativeName>
    <alternativeName>
        <fullName evidence="1">UDP-N-acetylglucosamine enolpyruvyl transferase</fullName>
        <shortName evidence="1">EPT</shortName>
    </alternativeName>
</protein>
<proteinExistence type="inferred from homology"/>
<comment type="function">
    <text evidence="1">Cell wall formation. Adds enolpyruvyl to UDP-N-acetylglucosamine.</text>
</comment>
<comment type="catalytic activity">
    <reaction evidence="1">
        <text>phosphoenolpyruvate + UDP-N-acetyl-alpha-D-glucosamine = UDP-N-acetyl-3-O-(1-carboxyvinyl)-alpha-D-glucosamine + phosphate</text>
        <dbReference type="Rhea" id="RHEA:18681"/>
        <dbReference type="ChEBI" id="CHEBI:43474"/>
        <dbReference type="ChEBI" id="CHEBI:57705"/>
        <dbReference type="ChEBI" id="CHEBI:58702"/>
        <dbReference type="ChEBI" id="CHEBI:68483"/>
        <dbReference type="EC" id="2.5.1.7"/>
    </reaction>
</comment>
<comment type="pathway">
    <text evidence="1">Cell wall biogenesis; peptidoglycan biosynthesis.</text>
</comment>
<comment type="subcellular location">
    <subcellularLocation>
        <location evidence="1">Cytoplasm</location>
    </subcellularLocation>
</comment>
<comment type="similarity">
    <text evidence="1">Belongs to the EPSP synthase family. MurA subfamily.</text>
</comment>
<evidence type="ECO:0000255" key="1">
    <source>
        <dbReference type="HAMAP-Rule" id="MF_00111"/>
    </source>
</evidence>
<organism>
    <name type="scientific">Mycobacterium bovis (strain ATCC BAA-935 / AF2122/97)</name>
    <dbReference type="NCBI Taxonomy" id="233413"/>
    <lineage>
        <taxon>Bacteria</taxon>
        <taxon>Bacillati</taxon>
        <taxon>Actinomycetota</taxon>
        <taxon>Actinomycetes</taxon>
        <taxon>Mycobacteriales</taxon>
        <taxon>Mycobacteriaceae</taxon>
        <taxon>Mycobacterium</taxon>
        <taxon>Mycobacterium tuberculosis complex</taxon>
    </lineage>
</organism>
<name>MURA_MYCBO</name>
<accession>P0A5L3</accession>
<accession>A0A1R3XXZ7</accession>
<accession>Q10604</accession>
<accession>X2BHZ4</accession>
<reference key="1">
    <citation type="journal article" date="2003" name="Proc. Natl. Acad. Sci. U.S.A.">
        <title>The complete genome sequence of Mycobacterium bovis.</title>
        <authorList>
            <person name="Garnier T."/>
            <person name="Eiglmeier K."/>
            <person name="Camus J.-C."/>
            <person name="Medina N."/>
            <person name="Mansoor H."/>
            <person name="Pryor M."/>
            <person name="Duthoy S."/>
            <person name="Grondin S."/>
            <person name="Lacroix C."/>
            <person name="Monsempe C."/>
            <person name="Simon S."/>
            <person name="Harris B."/>
            <person name="Atkin R."/>
            <person name="Doggett J."/>
            <person name="Mayes R."/>
            <person name="Keating L."/>
            <person name="Wheeler P.R."/>
            <person name="Parkhill J."/>
            <person name="Barrell B.G."/>
            <person name="Cole S.T."/>
            <person name="Gordon S.V."/>
            <person name="Hewinson R.G."/>
        </authorList>
    </citation>
    <scope>NUCLEOTIDE SEQUENCE [LARGE SCALE GENOMIC DNA]</scope>
    <source>
        <strain>ATCC BAA-935 / AF2122/97</strain>
    </source>
</reference>
<reference key="2">
    <citation type="journal article" date="2017" name="Genome Announc.">
        <title>Updated reference genome sequence and annotation of Mycobacterium bovis AF2122/97.</title>
        <authorList>
            <person name="Malone K.M."/>
            <person name="Farrell D."/>
            <person name="Stuber T.P."/>
            <person name="Schubert O.T."/>
            <person name="Aebersold R."/>
            <person name="Robbe-Austerman S."/>
            <person name="Gordon S.V."/>
        </authorList>
    </citation>
    <scope>NUCLEOTIDE SEQUENCE [LARGE SCALE GENOMIC DNA]</scope>
    <scope>GENOME REANNOTATION</scope>
    <source>
        <strain>ATCC BAA-935 / AF2122/97</strain>
    </source>
</reference>
<gene>
    <name evidence="1" type="primary">murA</name>
    <name type="synonym">murZ</name>
    <name type="ordered locus">BQ2027_MB1348</name>
</gene>
<dbReference type="EC" id="2.5.1.7" evidence="1"/>
<dbReference type="EMBL" id="LT708304">
    <property type="protein sequence ID" value="SIT99951.1"/>
    <property type="molecule type" value="Genomic_DNA"/>
</dbReference>
<dbReference type="RefSeq" id="NP_855002.1">
    <property type="nucleotide sequence ID" value="NC_002945.3"/>
</dbReference>
<dbReference type="RefSeq" id="WP_003406845.1">
    <property type="nucleotide sequence ID" value="NC_002945.4"/>
</dbReference>
<dbReference type="SMR" id="P0A5L3"/>
<dbReference type="GeneID" id="45425288"/>
<dbReference type="KEGG" id="mbo:BQ2027_MB1348"/>
<dbReference type="PATRIC" id="fig|233413.5.peg.1477"/>
<dbReference type="UniPathway" id="UPA00219"/>
<dbReference type="Proteomes" id="UP000001419">
    <property type="component" value="Chromosome"/>
</dbReference>
<dbReference type="GO" id="GO:0005737">
    <property type="term" value="C:cytoplasm"/>
    <property type="evidence" value="ECO:0007669"/>
    <property type="project" value="UniProtKB-SubCell"/>
</dbReference>
<dbReference type="GO" id="GO:0008760">
    <property type="term" value="F:UDP-N-acetylglucosamine 1-carboxyvinyltransferase activity"/>
    <property type="evidence" value="ECO:0007669"/>
    <property type="project" value="UniProtKB-UniRule"/>
</dbReference>
<dbReference type="GO" id="GO:0051301">
    <property type="term" value="P:cell division"/>
    <property type="evidence" value="ECO:0007669"/>
    <property type="project" value="UniProtKB-KW"/>
</dbReference>
<dbReference type="GO" id="GO:0071555">
    <property type="term" value="P:cell wall organization"/>
    <property type="evidence" value="ECO:0007669"/>
    <property type="project" value="UniProtKB-KW"/>
</dbReference>
<dbReference type="GO" id="GO:0009252">
    <property type="term" value="P:peptidoglycan biosynthetic process"/>
    <property type="evidence" value="ECO:0007669"/>
    <property type="project" value="UniProtKB-UniRule"/>
</dbReference>
<dbReference type="GO" id="GO:0008360">
    <property type="term" value="P:regulation of cell shape"/>
    <property type="evidence" value="ECO:0007669"/>
    <property type="project" value="UniProtKB-KW"/>
</dbReference>
<dbReference type="GO" id="GO:0019277">
    <property type="term" value="P:UDP-N-acetylgalactosamine biosynthetic process"/>
    <property type="evidence" value="ECO:0007669"/>
    <property type="project" value="InterPro"/>
</dbReference>
<dbReference type="CDD" id="cd01555">
    <property type="entry name" value="UdpNAET"/>
    <property type="match status" value="1"/>
</dbReference>
<dbReference type="Gene3D" id="3.65.10.10">
    <property type="entry name" value="Enolpyruvate transferase domain"/>
    <property type="match status" value="2"/>
</dbReference>
<dbReference type="HAMAP" id="MF_00111">
    <property type="entry name" value="MurA"/>
    <property type="match status" value="1"/>
</dbReference>
<dbReference type="InterPro" id="IPR001986">
    <property type="entry name" value="Enolpyruvate_Tfrase_dom"/>
</dbReference>
<dbReference type="InterPro" id="IPR036968">
    <property type="entry name" value="Enolpyruvate_Tfrase_sf"/>
</dbReference>
<dbReference type="InterPro" id="IPR050068">
    <property type="entry name" value="MurA_subfamily"/>
</dbReference>
<dbReference type="InterPro" id="IPR013792">
    <property type="entry name" value="RNA3'P_cycl/enolpyr_Trfase_a/b"/>
</dbReference>
<dbReference type="InterPro" id="IPR005750">
    <property type="entry name" value="UDP_GlcNAc_COvinyl_MurA"/>
</dbReference>
<dbReference type="NCBIfam" id="TIGR01072">
    <property type="entry name" value="murA"/>
    <property type="match status" value="1"/>
</dbReference>
<dbReference type="NCBIfam" id="NF006873">
    <property type="entry name" value="PRK09369.1"/>
    <property type="match status" value="1"/>
</dbReference>
<dbReference type="PANTHER" id="PTHR43783">
    <property type="entry name" value="UDP-N-ACETYLGLUCOSAMINE 1-CARBOXYVINYLTRANSFERASE"/>
    <property type="match status" value="1"/>
</dbReference>
<dbReference type="PANTHER" id="PTHR43783:SF1">
    <property type="entry name" value="UDP-N-ACETYLGLUCOSAMINE 1-CARBOXYVINYLTRANSFERASE"/>
    <property type="match status" value="1"/>
</dbReference>
<dbReference type="Pfam" id="PF00275">
    <property type="entry name" value="EPSP_synthase"/>
    <property type="match status" value="1"/>
</dbReference>
<dbReference type="SUPFAM" id="SSF55205">
    <property type="entry name" value="EPT/RTPC-like"/>
    <property type="match status" value="1"/>
</dbReference>
<feature type="chain" id="PRO_0000178891" description="UDP-N-acetylglucosamine 1-carboxyvinyltransferase">
    <location>
        <begin position="1"/>
        <end position="418"/>
    </location>
</feature>
<feature type="active site" description="Proton donor" evidence="1">
    <location>
        <position position="117"/>
    </location>
</feature>
<feature type="binding site" evidence="1">
    <location>
        <begin position="23"/>
        <end position="24"/>
    </location>
    <ligand>
        <name>phosphoenolpyruvate</name>
        <dbReference type="ChEBI" id="CHEBI:58702"/>
    </ligand>
</feature>
<feature type="binding site" evidence="1">
    <location>
        <position position="93"/>
    </location>
    <ligand>
        <name>UDP-N-acetyl-alpha-D-glucosamine</name>
        <dbReference type="ChEBI" id="CHEBI:57705"/>
    </ligand>
</feature>
<feature type="binding site" evidence="1">
    <location>
        <position position="305"/>
    </location>
    <ligand>
        <name>UDP-N-acetyl-alpha-D-glucosamine</name>
        <dbReference type="ChEBI" id="CHEBI:57705"/>
    </ligand>
</feature>
<feature type="binding site" evidence="1">
    <location>
        <position position="327"/>
    </location>
    <ligand>
        <name>UDP-N-acetyl-alpha-D-glucosamine</name>
        <dbReference type="ChEBI" id="CHEBI:57705"/>
    </ligand>
</feature>